<accession>Q2LT97</accession>
<proteinExistence type="inferred from homology"/>
<name>ASSY_SYNAS</name>
<evidence type="ECO:0000255" key="1">
    <source>
        <dbReference type="HAMAP-Rule" id="MF_00005"/>
    </source>
</evidence>
<keyword id="KW-0028">Amino-acid biosynthesis</keyword>
<keyword id="KW-0055">Arginine biosynthesis</keyword>
<keyword id="KW-0067">ATP-binding</keyword>
<keyword id="KW-0963">Cytoplasm</keyword>
<keyword id="KW-0436">Ligase</keyword>
<keyword id="KW-0547">Nucleotide-binding</keyword>
<keyword id="KW-1185">Reference proteome</keyword>
<reference key="1">
    <citation type="journal article" date="2007" name="Proc. Natl. Acad. Sci. U.S.A.">
        <title>The genome of Syntrophus aciditrophicus: life at the thermodynamic limit of microbial growth.</title>
        <authorList>
            <person name="McInerney M.J."/>
            <person name="Rohlin L."/>
            <person name="Mouttaki H."/>
            <person name="Kim U."/>
            <person name="Krupp R.S."/>
            <person name="Rios-Hernandez L."/>
            <person name="Sieber J."/>
            <person name="Struchtemeyer C.G."/>
            <person name="Bhattacharyya A."/>
            <person name="Campbell J.W."/>
            <person name="Gunsalus R.P."/>
        </authorList>
    </citation>
    <scope>NUCLEOTIDE SEQUENCE [LARGE SCALE GENOMIC DNA]</scope>
    <source>
        <strain>SB</strain>
    </source>
</reference>
<sequence>MDTGVKKVVLAYSGGLDTSVIVQWLIETYGCEVIAFAADVGQKEELEGLREKAIKTGASKIYIEDLREEFARDFVFPALRANAIYEGTYLLGTSLARPLIAKRQVEIARAEGADAVCHGATGKGNDQVRFELTYMALEPNIRIISAWKDPNWHFKSREDMFDYAEKHNIPLPLTREKPYSSDRNLLHISHEGAILEDPWAEPPEDIFTISLSPEAAPDKPTYVEIDFEQGNPVALDGARLSPAALMEKMNDIAGANGIGRVDMVENRFVGMKSRGVYETPGGTVLWAAHRALESLTMDREVMLMRDSLIPKYAQLAYNGFWYAPEMEALQALIDETQKKATGTVRMKLYKGNSIVVGRKSPYSLYSEDFATFEKDQVYNQMDATGFIRLNALRLRIAAMKK</sequence>
<comment type="catalytic activity">
    <reaction evidence="1">
        <text>L-citrulline + L-aspartate + ATP = 2-(N(omega)-L-arginino)succinate + AMP + diphosphate + H(+)</text>
        <dbReference type="Rhea" id="RHEA:10932"/>
        <dbReference type="ChEBI" id="CHEBI:15378"/>
        <dbReference type="ChEBI" id="CHEBI:29991"/>
        <dbReference type="ChEBI" id="CHEBI:30616"/>
        <dbReference type="ChEBI" id="CHEBI:33019"/>
        <dbReference type="ChEBI" id="CHEBI:57472"/>
        <dbReference type="ChEBI" id="CHEBI:57743"/>
        <dbReference type="ChEBI" id="CHEBI:456215"/>
        <dbReference type="EC" id="6.3.4.5"/>
    </reaction>
</comment>
<comment type="pathway">
    <text evidence="1">Amino-acid biosynthesis; L-arginine biosynthesis; L-arginine from L-ornithine and carbamoyl phosphate: step 2/3.</text>
</comment>
<comment type="subunit">
    <text evidence="1">Homotetramer.</text>
</comment>
<comment type="subcellular location">
    <subcellularLocation>
        <location evidence="1">Cytoplasm</location>
    </subcellularLocation>
</comment>
<comment type="similarity">
    <text evidence="1">Belongs to the argininosuccinate synthase family. Type 1 subfamily.</text>
</comment>
<gene>
    <name evidence="1" type="primary">argG</name>
    <name type="ordered locus">SYNAS_14290</name>
    <name type="ORF">SYN_02157</name>
</gene>
<feature type="chain" id="PRO_0000263987" description="Argininosuccinate synthase">
    <location>
        <begin position="1"/>
        <end position="401"/>
    </location>
</feature>
<feature type="binding site" evidence="1">
    <location>
        <begin position="11"/>
        <end position="19"/>
    </location>
    <ligand>
        <name>ATP</name>
        <dbReference type="ChEBI" id="CHEBI:30616"/>
    </ligand>
</feature>
<feature type="binding site" evidence="1">
    <location>
        <position position="38"/>
    </location>
    <ligand>
        <name>ATP</name>
        <dbReference type="ChEBI" id="CHEBI:30616"/>
    </ligand>
</feature>
<feature type="binding site" evidence="1">
    <location>
        <position position="89"/>
    </location>
    <ligand>
        <name>L-citrulline</name>
        <dbReference type="ChEBI" id="CHEBI:57743"/>
    </ligand>
</feature>
<feature type="binding site" evidence="1">
    <location>
        <position position="94"/>
    </location>
    <ligand>
        <name>L-citrulline</name>
        <dbReference type="ChEBI" id="CHEBI:57743"/>
    </ligand>
</feature>
<feature type="binding site" evidence="1">
    <location>
        <position position="119"/>
    </location>
    <ligand>
        <name>ATP</name>
        <dbReference type="ChEBI" id="CHEBI:30616"/>
    </ligand>
</feature>
<feature type="binding site" evidence="1">
    <location>
        <position position="121"/>
    </location>
    <ligand>
        <name>L-aspartate</name>
        <dbReference type="ChEBI" id="CHEBI:29991"/>
    </ligand>
</feature>
<feature type="binding site" evidence="1">
    <location>
        <position position="125"/>
    </location>
    <ligand>
        <name>L-aspartate</name>
        <dbReference type="ChEBI" id="CHEBI:29991"/>
    </ligand>
</feature>
<feature type="binding site" evidence="1">
    <location>
        <position position="125"/>
    </location>
    <ligand>
        <name>L-citrulline</name>
        <dbReference type="ChEBI" id="CHEBI:57743"/>
    </ligand>
</feature>
<feature type="binding site" evidence="1">
    <location>
        <position position="126"/>
    </location>
    <ligand>
        <name>L-aspartate</name>
        <dbReference type="ChEBI" id="CHEBI:29991"/>
    </ligand>
</feature>
<feature type="binding site" evidence="1">
    <location>
        <position position="129"/>
    </location>
    <ligand>
        <name>L-citrulline</name>
        <dbReference type="ChEBI" id="CHEBI:57743"/>
    </ligand>
</feature>
<feature type="binding site" evidence="1">
    <location>
        <position position="180"/>
    </location>
    <ligand>
        <name>L-citrulline</name>
        <dbReference type="ChEBI" id="CHEBI:57743"/>
    </ligand>
</feature>
<feature type="binding site" evidence="1">
    <location>
        <position position="189"/>
    </location>
    <ligand>
        <name>L-citrulline</name>
        <dbReference type="ChEBI" id="CHEBI:57743"/>
    </ligand>
</feature>
<feature type="binding site" evidence="1">
    <location>
        <position position="265"/>
    </location>
    <ligand>
        <name>L-citrulline</name>
        <dbReference type="ChEBI" id="CHEBI:57743"/>
    </ligand>
</feature>
<feature type="binding site" evidence="1">
    <location>
        <position position="277"/>
    </location>
    <ligand>
        <name>L-citrulline</name>
        <dbReference type="ChEBI" id="CHEBI:57743"/>
    </ligand>
</feature>
<organism>
    <name type="scientific">Syntrophus aciditrophicus (strain SB)</name>
    <dbReference type="NCBI Taxonomy" id="56780"/>
    <lineage>
        <taxon>Bacteria</taxon>
        <taxon>Pseudomonadati</taxon>
        <taxon>Thermodesulfobacteriota</taxon>
        <taxon>Syntrophia</taxon>
        <taxon>Syntrophales</taxon>
        <taxon>Syntrophaceae</taxon>
        <taxon>Syntrophus</taxon>
    </lineage>
</organism>
<protein>
    <recommendedName>
        <fullName evidence="1">Argininosuccinate synthase</fullName>
        <ecNumber evidence="1">6.3.4.5</ecNumber>
    </recommendedName>
    <alternativeName>
        <fullName evidence="1">Citrulline--aspartate ligase</fullName>
    </alternativeName>
</protein>
<dbReference type="EC" id="6.3.4.5" evidence="1"/>
<dbReference type="EMBL" id="CP000252">
    <property type="protein sequence ID" value="ABC77308.1"/>
    <property type="molecule type" value="Genomic_DNA"/>
</dbReference>
<dbReference type="RefSeq" id="WP_011417330.1">
    <property type="nucleotide sequence ID" value="NC_007759.1"/>
</dbReference>
<dbReference type="SMR" id="Q2LT97"/>
<dbReference type="FunCoup" id="Q2LT97">
    <property type="interactions" value="437"/>
</dbReference>
<dbReference type="STRING" id="56780.SYN_02157"/>
<dbReference type="KEGG" id="sat:SYN_02157"/>
<dbReference type="eggNOG" id="COG0137">
    <property type="taxonomic scope" value="Bacteria"/>
</dbReference>
<dbReference type="HOGENOM" id="CLU_032784_4_2_7"/>
<dbReference type="InParanoid" id="Q2LT97"/>
<dbReference type="OrthoDB" id="9801641at2"/>
<dbReference type="UniPathway" id="UPA00068">
    <property type="reaction ID" value="UER00113"/>
</dbReference>
<dbReference type="Proteomes" id="UP000001933">
    <property type="component" value="Chromosome"/>
</dbReference>
<dbReference type="GO" id="GO:0005737">
    <property type="term" value="C:cytoplasm"/>
    <property type="evidence" value="ECO:0007669"/>
    <property type="project" value="UniProtKB-SubCell"/>
</dbReference>
<dbReference type="GO" id="GO:0004055">
    <property type="term" value="F:argininosuccinate synthase activity"/>
    <property type="evidence" value="ECO:0007669"/>
    <property type="project" value="UniProtKB-UniRule"/>
</dbReference>
<dbReference type="GO" id="GO:0005524">
    <property type="term" value="F:ATP binding"/>
    <property type="evidence" value="ECO:0007669"/>
    <property type="project" value="UniProtKB-UniRule"/>
</dbReference>
<dbReference type="GO" id="GO:0000053">
    <property type="term" value="P:argininosuccinate metabolic process"/>
    <property type="evidence" value="ECO:0007669"/>
    <property type="project" value="TreeGrafter"/>
</dbReference>
<dbReference type="GO" id="GO:0006526">
    <property type="term" value="P:L-arginine biosynthetic process"/>
    <property type="evidence" value="ECO:0007669"/>
    <property type="project" value="UniProtKB-UniRule"/>
</dbReference>
<dbReference type="GO" id="GO:0000050">
    <property type="term" value="P:urea cycle"/>
    <property type="evidence" value="ECO:0007669"/>
    <property type="project" value="TreeGrafter"/>
</dbReference>
<dbReference type="CDD" id="cd01999">
    <property type="entry name" value="ASS"/>
    <property type="match status" value="1"/>
</dbReference>
<dbReference type="FunFam" id="3.40.50.620:FF:000019">
    <property type="entry name" value="Argininosuccinate synthase"/>
    <property type="match status" value="1"/>
</dbReference>
<dbReference type="FunFam" id="3.90.1260.10:FF:000007">
    <property type="entry name" value="Argininosuccinate synthase"/>
    <property type="match status" value="1"/>
</dbReference>
<dbReference type="Gene3D" id="3.90.1260.10">
    <property type="entry name" value="Argininosuccinate synthetase, chain A, domain 2"/>
    <property type="match status" value="1"/>
</dbReference>
<dbReference type="Gene3D" id="3.40.50.620">
    <property type="entry name" value="HUPs"/>
    <property type="match status" value="1"/>
</dbReference>
<dbReference type="Gene3D" id="1.20.5.470">
    <property type="entry name" value="Single helix bin"/>
    <property type="match status" value="1"/>
</dbReference>
<dbReference type="HAMAP" id="MF_00005">
    <property type="entry name" value="Arg_succ_synth_type1"/>
    <property type="match status" value="1"/>
</dbReference>
<dbReference type="InterPro" id="IPR048268">
    <property type="entry name" value="Arginosuc_syn_C"/>
</dbReference>
<dbReference type="InterPro" id="IPR048267">
    <property type="entry name" value="Arginosuc_syn_N"/>
</dbReference>
<dbReference type="InterPro" id="IPR001518">
    <property type="entry name" value="Arginosuc_synth"/>
</dbReference>
<dbReference type="InterPro" id="IPR018223">
    <property type="entry name" value="Arginosuc_synth_CS"/>
</dbReference>
<dbReference type="InterPro" id="IPR023434">
    <property type="entry name" value="Arginosuc_synth_type_1_subfam"/>
</dbReference>
<dbReference type="InterPro" id="IPR024074">
    <property type="entry name" value="AS_cat/multimer_dom_body"/>
</dbReference>
<dbReference type="InterPro" id="IPR014729">
    <property type="entry name" value="Rossmann-like_a/b/a_fold"/>
</dbReference>
<dbReference type="NCBIfam" id="TIGR00032">
    <property type="entry name" value="argG"/>
    <property type="match status" value="1"/>
</dbReference>
<dbReference type="NCBIfam" id="NF001770">
    <property type="entry name" value="PRK00509.1"/>
    <property type="match status" value="1"/>
</dbReference>
<dbReference type="PANTHER" id="PTHR11587">
    <property type="entry name" value="ARGININOSUCCINATE SYNTHASE"/>
    <property type="match status" value="1"/>
</dbReference>
<dbReference type="PANTHER" id="PTHR11587:SF2">
    <property type="entry name" value="ARGININOSUCCINATE SYNTHASE"/>
    <property type="match status" value="1"/>
</dbReference>
<dbReference type="Pfam" id="PF20979">
    <property type="entry name" value="Arginosuc_syn_C"/>
    <property type="match status" value="1"/>
</dbReference>
<dbReference type="Pfam" id="PF00764">
    <property type="entry name" value="Arginosuc_synth"/>
    <property type="match status" value="1"/>
</dbReference>
<dbReference type="SUPFAM" id="SSF52402">
    <property type="entry name" value="Adenine nucleotide alpha hydrolases-like"/>
    <property type="match status" value="1"/>
</dbReference>
<dbReference type="SUPFAM" id="SSF69864">
    <property type="entry name" value="Argininosuccinate synthetase, C-terminal domain"/>
    <property type="match status" value="1"/>
</dbReference>
<dbReference type="PROSITE" id="PS00564">
    <property type="entry name" value="ARGININOSUCCIN_SYN_1"/>
    <property type="match status" value="1"/>
</dbReference>
<dbReference type="PROSITE" id="PS00565">
    <property type="entry name" value="ARGININOSUCCIN_SYN_2"/>
    <property type="match status" value="1"/>
</dbReference>